<name>LSC_STRMU</name>
<accession>P11701</accession>
<dbReference type="EC" id="2.4.1.10" evidence="8"/>
<dbReference type="EMBL" id="M18954">
    <property type="protein sequence ID" value="AAA88584.1"/>
    <property type="molecule type" value="Genomic_DNA"/>
</dbReference>
<dbReference type="EMBL" id="AE014133">
    <property type="protein sequence ID" value="AAN59631.1"/>
    <property type="molecule type" value="Genomic_DNA"/>
</dbReference>
<dbReference type="PIR" id="B28551">
    <property type="entry name" value="B28551"/>
</dbReference>
<dbReference type="RefSeq" id="NP_722325.1">
    <property type="nucleotide sequence ID" value="NC_004350.2"/>
</dbReference>
<dbReference type="RefSeq" id="WP_002262343.1">
    <property type="nucleotide sequence ID" value="NC_004350.2"/>
</dbReference>
<dbReference type="SMR" id="P11701"/>
<dbReference type="STRING" id="210007.SMU_2028"/>
<dbReference type="CAZy" id="GH68">
    <property type="family name" value="Glycoside Hydrolase Family 68"/>
</dbReference>
<dbReference type="KEGG" id="smu:SMU_2028"/>
<dbReference type="PATRIC" id="fig|210007.7.peg.1808"/>
<dbReference type="eggNOG" id="COG1621">
    <property type="taxonomic scope" value="Bacteria"/>
</dbReference>
<dbReference type="HOGENOM" id="CLU_013854_0_0_9"/>
<dbReference type="OrthoDB" id="2210426at2"/>
<dbReference type="Proteomes" id="UP000002512">
    <property type="component" value="Chromosome"/>
</dbReference>
<dbReference type="GO" id="GO:0009986">
    <property type="term" value="C:cell surface"/>
    <property type="evidence" value="ECO:0007669"/>
    <property type="project" value="UniProtKB-SubCell"/>
</dbReference>
<dbReference type="GO" id="GO:0005886">
    <property type="term" value="C:plasma membrane"/>
    <property type="evidence" value="ECO:0007669"/>
    <property type="project" value="UniProtKB-SubCell"/>
</dbReference>
<dbReference type="GO" id="GO:0050053">
    <property type="term" value="F:levansucrase activity"/>
    <property type="evidence" value="ECO:0007669"/>
    <property type="project" value="UniProtKB-EC"/>
</dbReference>
<dbReference type="GO" id="GO:0046872">
    <property type="term" value="F:metal ion binding"/>
    <property type="evidence" value="ECO:0007669"/>
    <property type="project" value="UniProtKB-KW"/>
</dbReference>
<dbReference type="GO" id="GO:0009758">
    <property type="term" value="P:carbohydrate utilization"/>
    <property type="evidence" value="ECO:0007669"/>
    <property type="project" value="InterPro"/>
</dbReference>
<dbReference type="CDD" id="cd08997">
    <property type="entry name" value="GH68"/>
    <property type="match status" value="1"/>
</dbReference>
<dbReference type="Gene3D" id="2.115.10.20">
    <property type="entry name" value="Glycosyl hydrolase domain, family 43"/>
    <property type="match status" value="1"/>
</dbReference>
<dbReference type="InterPro" id="IPR003469">
    <property type="entry name" value="Glyco_hydro_68"/>
</dbReference>
<dbReference type="InterPro" id="IPR023296">
    <property type="entry name" value="Glyco_hydro_beta-prop_sf"/>
</dbReference>
<dbReference type="InterPro" id="IPR022263">
    <property type="entry name" value="KxYKxGKxW"/>
</dbReference>
<dbReference type="NCBIfam" id="TIGR03715">
    <property type="entry name" value="KxYKxGKxW"/>
    <property type="match status" value="1"/>
</dbReference>
<dbReference type="Pfam" id="PF02435">
    <property type="entry name" value="Glyco_hydro_68"/>
    <property type="match status" value="1"/>
</dbReference>
<dbReference type="Pfam" id="PF19258">
    <property type="entry name" value="KxYKxGKxW_sig"/>
    <property type="match status" value="1"/>
</dbReference>
<dbReference type="SUPFAM" id="SSF75005">
    <property type="entry name" value="Arabinanase/levansucrase/invertase"/>
    <property type="match status" value="1"/>
</dbReference>
<sequence>METKVRKKMYKKGKFWVVATITTAMLTGIGLSSVQADEANSTQVSSELAERSQVQENTTASSSAAENQDKTEVKETPSTNPAAATVENTDQTTKVITDNAAVESKASKTKDQAATVTKTSASTPEVGQTNEKAKATKEADITTPKNTIDEYGLTEQARKIATEAGINLSSLTQKQVEALNKVKLTSDAQTGHQMTYQEFDKIAQTLIAQDERYAIPYFNAKAIKNMKAATTRDAQTGQIADLDVWDSWPVQDAKTGEVINWNGYQLVVAMMGIPNTNDNHIYLLYNKYGDNNFDHWKNAGSIFGYNETPLTQEWSGSATVNEDGSLQLFYTKVDTSDKNSNNQRLATATVNLGFDDQDVRILSVENDKVLTPEGGDGYHYQSYQQWRSTFTGADNIAMRDPHVIEDENGDRYLVFEASTGTENYQGEDQIYNFTNYGGSSAYNVKSLFRFLDDQDMYNRASWANAAIGILKLKGDKKTPEVDQFYTPLLSSTMVSDELERPNVVKLGDKYYLFTASRLNHGSNNDAWNKANEVVGDNVVMLGYVSDQLTNGYKPLNNSGVVLTASVPADWRTATYSYYAVPVAGSSDTLLMTAYMTNRNEVAGKGKNSTWAPSFLIQVLPDGTTKVLAEMTQQGDWIWDESSRTTDTVGTLDTAYLPGENDGYIDWNVIGGYGLKPHTPGQYQPTVPSTPIHTDDIISFEVSFDGHLVIKPVKVNNDSAGRIDQSRNSGGSLNVAFNVYAGGNISVKPSQKSINNTKETKKAHHVSTEKKQKKGNSFFAALLALFSAFCVSIGFK</sequence>
<reference key="1">
    <citation type="journal article" date="1988" name="J. Bacteriol.">
        <title>Sequence analysis of the Streptococcus mutans fructosyltransferase gene and flanking regions.</title>
        <authorList>
            <person name="Shiroza T."/>
            <person name="Kuramitsu H.K."/>
        </authorList>
    </citation>
    <scope>NUCLEOTIDE SEQUENCE [GENOMIC DNA]</scope>
    <source>
        <strain>GS-5</strain>
    </source>
</reference>
<reference key="2">
    <citation type="journal article" date="2002" name="Proc. Natl. Acad. Sci. U.S.A.">
        <title>Genome sequence of Streptococcus mutans UA159, a cariogenic dental pathogen.</title>
        <authorList>
            <person name="Ajdic D.J."/>
            <person name="McShan W.M."/>
            <person name="McLaughlin R.E."/>
            <person name="Savic G."/>
            <person name="Chang J."/>
            <person name="Carson M.B."/>
            <person name="Primeaux C."/>
            <person name="Tian R."/>
            <person name="Kenton S."/>
            <person name="Jia H.G."/>
            <person name="Lin S.P."/>
            <person name="Qian Y."/>
            <person name="Li S."/>
            <person name="Zhu H."/>
            <person name="Najar F.Z."/>
            <person name="Lai H."/>
            <person name="White J."/>
            <person name="Roe B.A."/>
            <person name="Ferretti J.J."/>
        </authorList>
    </citation>
    <scope>NUCLEOTIDE SEQUENCE [LARGE SCALE GENOMIC DNA]</scope>
    <source>
        <strain>ATCC 700610 / UA159</strain>
    </source>
</reference>
<organism>
    <name type="scientific">Streptococcus mutans serotype c (strain ATCC 700610 / UA159)</name>
    <dbReference type="NCBI Taxonomy" id="210007"/>
    <lineage>
        <taxon>Bacteria</taxon>
        <taxon>Bacillati</taxon>
        <taxon>Bacillota</taxon>
        <taxon>Bacilli</taxon>
        <taxon>Lactobacillales</taxon>
        <taxon>Streptococcaceae</taxon>
        <taxon>Streptococcus</taxon>
    </lineage>
</organism>
<keyword id="KW-0106">Calcium</keyword>
<keyword id="KW-0119">Carbohydrate metabolism</keyword>
<keyword id="KW-1003">Cell membrane</keyword>
<keyword id="KW-0328">Glycosyltransferase</keyword>
<keyword id="KW-0472">Membrane</keyword>
<keyword id="KW-0479">Metal-binding</keyword>
<keyword id="KW-1185">Reference proteome</keyword>
<keyword id="KW-0732">Signal</keyword>
<keyword id="KW-0808">Transferase</keyword>
<keyword id="KW-0812">Transmembrane</keyword>
<keyword id="KW-1133">Transmembrane helix</keyword>
<gene>
    <name evidence="6" type="primary">ftf</name>
    <name evidence="5" type="synonym">sacB</name>
    <name evidence="9" type="ordered locus">SMU_2028</name>
</gene>
<comment type="function">
    <text evidence="1">Catalyzes the synthesis of levan, a fructose polymer, by transferring the fructosyl moiety from sucrose to a growing acceptor molecule (By similarity). Also displays sucrose hydrolase activity (By similarity).</text>
</comment>
<comment type="catalytic activity">
    <reaction evidence="8">
        <text>[6)-beta-D-fructofuranosyl-(2-&gt;](n) alpha-D-glucopyranoside + sucrose = [6)-beta-D-fructofuranosyl-(2-&gt;](n+1) alpha-D-glucopyranoside + D-glucose</text>
        <dbReference type="Rhea" id="RHEA:13653"/>
        <dbReference type="Rhea" id="RHEA-COMP:13093"/>
        <dbReference type="Rhea" id="RHEA-COMP:13094"/>
        <dbReference type="ChEBI" id="CHEBI:4167"/>
        <dbReference type="ChEBI" id="CHEBI:17992"/>
        <dbReference type="ChEBI" id="CHEBI:134464"/>
        <dbReference type="EC" id="2.4.1.10"/>
    </reaction>
</comment>
<comment type="activity regulation">
    <text evidence="1">Ca(2+) may play an important structural role and promote stability of levansucrase.</text>
</comment>
<comment type="subcellular location">
    <subcellularLocation>
        <location evidence="7">Cell membrane</location>
        <topology evidence="3">Single-pass membrane protein</topology>
        <orientation evidence="7">Extracellular side</orientation>
    </subcellularLocation>
    <subcellularLocation>
        <location evidence="2">Cell surface</location>
    </subcellularLocation>
</comment>
<comment type="similarity">
    <text evidence="7">Belongs to the glycosyl hydrolase 68 family.</text>
</comment>
<proteinExistence type="inferred from homology"/>
<protein>
    <recommendedName>
        <fullName evidence="7">Levansucrase</fullName>
        <ecNumber evidence="8">2.4.1.10</ecNumber>
    </recommendedName>
    <alternativeName>
        <fullName>Beta-D-fructofuranosyl transferase</fullName>
    </alternativeName>
    <alternativeName>
        <fullName evidence="6">Fructosyltransferase</fullName>
        <shortName evidence="6">FTF</shortName>
    </alternativeName>
    <alternativeName>
        <fullName>Sucrose 6-fructosyl transferase</fullName>
    </alternativeName>
</protein>
<evidence type="ECO:0000250" key="1">
    <source>
        <dbReference type="UniProtKB" id="P05655"/>
    </source>
</evidence>
<evidence type="ECO:0000250" key="2">
    <source>
        <dbReference type="UniProtKB" id="Q55242"/>
    </source>
</evidence>
<evidence type="ECO:0000255" key="3"/>
<evidence type="ECO:0000256" key="4">
    <source>
        <dbReference type="SAM" id="MobiDB-lite"/>
    </source>
</evidence>
<evidence type="ECO:0000303" key="5">
    <source>
    </source>
</evidence>
<evidence type="ECO:0000303" key="6">
    <source>
    </source>
</evidence>
<evidence type="ECO:0000305" key="7"/>
<evidence type="ECO:0000305" key="8">
    <source>
    </source>
</evidence>
<evidence type="ECO:0000312" key="9">
    <source>
        <dbReference type="EMBL" id="AAN59631.1"/>
    </source>
</evidence>
<feature type="signal peptide" evidence="3">
    <location>
        <begin position="1"/>
        <end position="36"/>
    </location>
</feature>
<feature type="chain" id="PRO_0000012250" description="Levansucrase">
    <location>
        <begin position="37"/>
        <end position="795"/>
    </location>
</feature>
<feature type="transmembrane region" description="Helical" evidence="3">
    <location>
        <begin position="774"/>
        <end position="794"/>
    </location>
</feature>
<feature type="region of interest" description="Disordered" evidence="4">
    <location>
        <begin position="42"/>
        <end position="83"/>
    </location>
</feature>
<feature type="region of interest" description="Disordered" evidence="4">
    <location>
        <begin position="103"/>
        <end position="138"/>
    </location>
</feature>
<feature type="compositionally biased region" description="Polar residues" evidence="4">
    <location>
        <begin position="42"/>
        <end position="66"/>
    </location>
</feature>
<feature type="compositionally biased region" description="Polar residues" evidence="4">
    <location>
        <begin position="112"/>
        <end position="130"/>
    </location>
</feature>
<feature type="active site" description="Nucleophile" evidence="1">
    <location>
        <position position="246"/>
    </location>
</feature>
<feature type="active site" description="Proton donor/acceptor" evidence="1">
    <location>
        <position position="499"/>
    </location>
</feature>
<feature type="binding site" evidence="1">
    <location>
        <position position="245"/>
    </location>
    <ligand>
        <name>sucrose</name>
        <dbReference type="ChEBI" id="CHEBI:17992"/>
    </ligand>
</feature>
<feature type="binding site" evidence="1">
    <location>
        <position position="246"/>
    </location>
    <ligand>
        <name>sucrose</name>
        <dbReference type="ChEBI" id="CHEBI:17992"/>
    </ligand>
</feature>
<feature type="binding site" evidence="1">
    <location>
        <position position="315"/>
    </location>
    <ligand>
        <name>sucrose</name>
        <dbReference type="ChEBI" id="CHEBI:17992"/>
    </ligand>
</feature>
<feature type="binding site" evidence="1">
    <location>
        <position position="394"/>
    </location>
    <ligand>
        <name>Ca(2+)</name>
        <dbReference type="ChEBI" id="CHEBI:29108"/>
    </ligand>
</feature>
<feature type="binding site" evidence="1">
    <location>
        <position position="399"/>
    </location>
    <ligand>
        <name>sucrose</name>
        <dbReference type="ChEBI" id="CHEBI:17992"/>
    </ligand>
</feature>
<feature type="binding site" evidence="1">
    <location>
        <position position="400"/>
    </location>
    <ligand>
        <name>sucrose</name>
        <dbReference type="ChEBI" id="CHEBI:17992"/>
    </ligand>
</feature>
<feature type="binding site" evidence="1">
    <location>
        <position position="425"/>
    </location>
    <ligand>
        <name>Ca(2+)</name>
        <dbReference type="ChEBI" id="CHEBI:29108"/>
    </ligand>
</feature>
<feature type="binding site" evidence="1">
    <location>
        <position position="464"/>
    </location>
    <ligand>
        <name>Ca(2+)</name>
        <dbReference type="ChEBI" id="CHEBI:29108"/>
    </ligand>
</feature>
<feature type="binding site" evidence="1">
    <location>
        <position position="496"/>
    </location>
    <ligand>
        <name>Ca(2+)</name>
        <dbReference type="ChEBI" id="CHEBI:29108"/>
    </ligand>
</feature>
<feature type="binding site" evidence="1">
    <location>
        <position position="497"/>
    </location>
    <ligand>
        <name>sucrose</name>
        <dbReference type="ChEBI" id="CHEBI:17992"/>
    </ligand>
</feature>
<feature type="binding site" evidence="1">
    <location>
        <position position="517"/>
    </location>
    <ligand>
        <name>sucrose</name>
        <dbReference type="ChEBI" id="CHEBI:17992"/>
    </ligand>
</feature>
<feature type="site" description="Transition state stabilizer" evidence="1">
    <location>
        <position position="400"/>
    </location>
</feature>
<feature type="sequence conflict" description="In Ref. 1; AAA88584." evidence="7" ref="1">
    <original>D</original>
    <variation>A</variation>
    <location>
        <position position="69"/>
    </location>
</feature>
<feature type="sequence conflict" description="In Ref. 1; AAA88584." evidence="7" ref="1">
    <original>K</original>
    <variation>Q</variation>
    <location>
        <position position="74"/>
    </location>
</feature>
<feature type="sequence conflict" description="In Ref. 1; AAA88584." evidence="7" ref="1">
    <original>S</original>
    <variation>A</variation>
    <location>
        <position position="120"/>
    </location>
</feature>
<feature type="sequence conflict" description="In Ref. 1; AAA88584." evidence="7" ref="1">
    <original>E</original>
    <variation>EKD</variation>
    <location>
        <position position="131"/>
    </location>
</feature>
<feature type="sequence conflict" description="In Ref. 1; AAA88584." evidence="7" ref="1">
    <original>GDG</original>
    <variation>VMA</variation>
    <location>
        <begin position="375"/>
        <end position="377"/>
    </location>
</feature>
<feature type="sequence conflict" description="In Ref. 1; AAA88584." evidence="7" ref="1">
    <original>S</original>
    <variation>P</variation>
    <location>
        <position position="641"/>
    </location>
</feature>
<feature type="sequence conflict" description="In Ref. 1; AAA88584." evidence="7" ref="1">
    <original>Y</original>
    <variation>S</variation>
    <location>
        <position position="739"/>
    </location>
</feature>